<protein>
    <recommendedName>
        <fullName>Protein UL24 homolog</fullName>
    </recommendedName>
</protein>
<sequence>MSLTGLPDIRKKIGQFHHLRIYKQILSFQGNFARLNYFLGDVFPANLRSASVSVFFEVRLGPRIPDCIVLLKSVDVKDEFAFHCYFFEFKTTLGKSTMQSVHHNCIHQAQYLQGLRQLQQSISFLDQYLIADEVSWNVVPVICFFRQWGLKLDFFKKFSGKTKRLSFSFIRDLFARSQDGAVQSLLSIPNYTNFRRACQKHTDLYRKRCRKAPKSVLTKTSGENRSRASRQVAKNAPKNRIRRTAKKDAKRQ</sequence>
<organismHost>
    <name type="scientific">Homo sapiens</name>
    <name type="common">Human</name>
    <dbReference type="NCBI Taxonomy" id="9606"/>
</organismHost>
<accession>P52535</accession>
<gene>
    <name type="primary">U49</name>
    <name type="synonym">LF2</name>
</gene>
<feature type="chain" id="PRO_0000115984" description="Protein UL24 homolog">
    <location>
        <begin position="1"/>
        <end position="252"/>
    </location>
</feature>
<feature type="region of interest" description="Disordered" evidence="2">
    <location>
        <begin position="215"/>
        <end position="252"/>
    </location>
</feature>
<feature type="compositionally biased region" description="Basic residues" evidence="2">
    <location>
        <begin position="237"/>
        <end position="252"/>
    </location>
</feature>
<keyword id="KW-1035">Host cytoplasm</keyword>
<keyword id="KW-1040">Host Golgi apparatus</keyword>
<keyword id="KW-1048">Host nucleus</keyword>
<keyword id="KW-0426">Late protein</keyword>
<keyword id="KW-0946">Virion</keyword>
<proteinExistence type="evidence at transcript level"/>
<organism>
    <name type="scientific">Human herpesvirus 6A (strain GS)</name>
    <name type="common">HHV-6 variant A</name>
    <name type="synonym">Human B lymphotropic virus</name>
    <dbReference type="NCBI Taxonomy" id="10369"/>
    <lineage>
        <taxon>Viruses</taxon>
        <taxon>Duplodnaviria</taxon>
        <taxon>Heunggongvirae</taxon>
        <taxon>Peploviricota</taxon>
        <taxon>Herviviricetes</taxon>
        <taxon>Herpesvirales</taxon>
        <taxon>Orthoherpesviridae</taxon>
        <taxon>Betaherpesvirinae</taxon>
        <taxon>Roseolovirus</taxon>
        <taxon>Roseolovirus humanbeta6a</taxon>
        <taxon>Human betaherpesvirus 6A</taxon>
    </lineage>
</organism>
<comment type="function">
    <text evidence="1">May participate in nuclear egress of viral particles. Plays a role in the dispersal of several host nucleolar proteins including NCL/nucleolin and NPM1. Since deletion of host NCL/nucleolin negatively impact on nuclear egress, UL24 supposedly acts on this process through its effect on host nucleoli (By similarity).</text>
</comment>
<comment type="subcellular location">
    <subcellularLocation>
        <location evidence="1">Virion</location>
    </subcellularLocation>
    <subcellularLocation>
        <location evidence="1">Host cytoplasm</location>
    </subcellularLocation>
    <subcellularLocation>
        <location evidence="1">Host nucleus</location>
        <location evidence="1">Host nucleolus</location>
    </subcellularLocation>
    <subcellularLocation>
        <location evidence="1">Host Golgi apparatus</location>
    </subcellularLocation>
</comment>
<comment type="induction">
    <text>Expressed late in the infection cycle.</text>
</comment>
<comment type="similarity">
    <text evidence="3">Belongs to the herpesviridae UL24 family.</text>
</comment>
<reference key="1">
    <citation type="journal article" date="1991" name="J. Virol.">
        <title>Identification of the human herpesvirus 6 glycoprotein H and putative large tegument protein genes.</title>
        <authorList>
            <person name="Josephs S.F."/>
            <person name="Ablashi D.V."/>
            <person name="Salahuddin S.Z."/>
            <person name="Jagodzinski L.L."/>
            <person name="Wong-Staal F."/>
            <person name="Gallo R.C."/>
        </authorList>
    </citation>
    <scope>NUCLEOTIDE SEQUENCE [GENOMIC DNA]</scope>
</reference>
<evidence type="ECO:0000250" key="1"/>
<evidence type="ECO:0000256" key="2">
    <source>
        <dbReference type="SAM" id="MobiDB-lite"/>
    </source>
</evidence>
<evidence type="ECO:0000305" key="3"/>
<name>UL24_HHV6G</name>
<dbReference type="EMBL" id="S57509">
    <property type="protein sequence ID" value="AAB19778.1"/>
    <property type="molecule type" value="Genomic_DNA"/>
</dbReference>
<dbReference type="GO" id="GO:0044177">
    <property type="term" value="C:host cell Golgi apparatus"/>
    <property type="evidence" value="ECO:0007669"/>
    <property type="project" value="UniProtKB-SubCell"/>
</dbReference>
<dbReference type="GO" id="GO:0044196">
    <property type="term" value="C:host cell nucleolus"/>
    <property type="evidence" value="ECO:0007669"/>
    <property type="project" value="UniProtKB-SubCell"/>
</dbReference>
<dbReference type="GO" id="GO:0044423">
    <property type="term" value="C:virion component"/>
    <property type="evidence" value="ECO:0007669"/>
    <property type="project" value="UniProtKB-KW"/>
</dbReference>
<dbReference type="InterPro" id="IPR002580">
    <property type="entry name" value="Herpes_UL24"/>
</dbReference>
<dbReference type="Pfam" id="PF01646">
    <property type="entry name" value="Herpes_UL24"/>
    <property type="match status" value="1"/>
</dbReference>